<name>CAHC_TOBAC</name>
<organism>
    <name type="scientific">Nicotiana tabacum</name>
    <name type="common">Common tobacco</name>
    <dbReference type="NCBI Taxonomy" id="4097"/>
    <lineage>
        <taxon>Eukaryota</taxon>
        <taxon>Viridiplantae</taxon>
        <taxon>Streptophyta</taxon>
        <taxon>Embryophyta</taxon>
        <taxon>Tracheophyta</taxon>
        <taxon>Spermatophyta</taxon>
        <taxon>Magnoliopsida</taxon>
        <taxon>eudicotyledons</taxon>
        <taxon>Gunneridae</taxon>
        <taxon>Pentapetalae</taxon>
        <taxon>asterids</taxon>
        <taxon>lamiids</taxon>
        <taxon>Solanales</taxon>
        <taxon>Solanaceae</taxon>
        <taxon>Nicotianoideae</taxon>
        <taxon>Nicotianeae</taxon>
        <taxon>Nicotiana</taxon>
    </lineage>
</organism>
<sequence>MSTASINSCLTISPAQASLKKPTRPVAFARLSNSSSSTSVPSLIRNEPVFAAPTPIINPILREEMAKESYEQAIAALEKLLSEKGELGPIAAARVDQITAELQSSDGSKPFDPVEHMKAGFIHFKTEKYEKNPALYGELSKGQSPKFMVFACSDSRVCPSHVLNFQPGEAFVVRNIANMVPAYDKTRYSGVGAAIEYAVLHLKVENIVVIGHSACGGIKGLMSLPADGSESTAFIEDWVKIGLPAKAKVQGEHVDKCFADQCTACEKEAVNVSLGNLLTYPFVREGLVKKTLALKGGHYDFVNGGFELWGLEFGLSPSLSV</sequence>
<reference key="1">
    <citation type="submission" date="1992-05" db="EMBL/GenBank/DDBJ databases">
        <title>Isolation of carbonic anhydrase cDNA from tobacco.</title>
        <authorList>
            <person name="Majeau N."/>
            <person name="Coleman J.R."/>
        </authorList>
    </citation>
    <scope>NUCLEOTIDE SEQUENCE [MRNA]</scope>
</reference>
<reference key="2">
    <citation type="submission" date="1993-06" db="EMBL/GenBank/DDBJ databases">
        <title>Isolation of a cDNA clone for tobacco chloroplastic carbonic anhydrase.</title>
        <authorList>
            <person name="Price G.D."/>
            <person name="Harrison K."/>
            <person name="Gallagher A."/>
            <person name="Badger M.R."/>
        </authorList>
    </citation>
    <scope>NUCLEOTIDE SEQUENCE [MRNA] OF 58-321</scope>
    <source>
        <strain>cv. SR1</strain>
        <tissue>Leaf</tissue>
    </source>
</reference>
<dbReference type="EC" id="4.2.1.1"/>
<dbReference type="EMBL" id="M94135">
    <property type="protein sequence ID" value="AAA34065.1"/>
    <property type="molecule type" value="mRNA"/>
</dbReference>
<dbReference type="EMBL" id="L19255">
    <property type="protein sequence ID" value="AAA34057.1"/>
    <property type="molecule type" value="mRNA"/>
</dbReference>
<dbReference type="PIR" id="T02886">
    <property type="entry name" value="T02886"/>
</dbReference>
<dbReference type="PIR" id="T02936">
    <property type="entry name" value="T02936"/>
</dbReference>
<dbReference type="RefSeq" id="NP_001313031.1">
    <property type="nucleotide sequence ID" value="NM_001326102.1"/>
</dbReference>
<dbReference type="SMR" id="P27141"/>
<dbReference type="STRING" id="4097.P27141"/>
<dbReference type="PaxDb" id="4097-P27141"/>
<dbReference type="GeneID" id="107822687"/>
<dbReference type="KEGG" id="nta:107822687"/>
<dbReference type="OrthoDB" id="10248475at2759"/>
<dbReference type="Proteomes" id="UP000084051">
    <property type="component" value="Unplaced"/>
</dbReference>
<dbReference type="GO" id="GO:0009570">
    <property type="term" value="C:chloroplast stroma"/>
    <property type="evidence" value="ECO:0007669"/>
    <property type="project" value="UniProtKB-SubCell"/>
</dbReference>
<dbReference type="GO" id="GO:0004089">
    <property type="term" value="F:carbonate dehydratase activity"/>
    <property type="evidence" value="ECO:0007669"/>
    <property type="project" value="UniProtKB-EC"/>
</dbReference>
<dbReference type="GO" id="GO:0008270">
    <property type="term" value="F:zinc ion binding"/>
    <property type="evidence" value="ECO:0007669"/>
    <property type="project" value="InterPro"/>
</dbReference>
<dbReference type="GO" id="GO:0015976">
    <property type="term" value="P:carbon utilization"/>
    <property type="evidence" value="ECO:0007669"/>
    <property type="project" value="InterPro"/>
</dbReference>
<dbReference type="CDD" id="cd00884">
    <property type="entry name" value="beta_CA_cladeB"/>
    <property type="match status" value="1"/>
</dbReference>
<dbReference type="FunFam" id="3.40.1050.10:FF:000002">
    <property type="entry name" value="Carbonic anhydrase"/>
    <property type="match status" value="1"/>
</dbReference>
<dbReference type="Gene3D" id="3.40.1050.10">
    <property type="entry name" value="Carbonic anhydrase"/>
    <property type="match status" value="1"/>
</dbReference>
<dbReference type="InterPro" id="IPR045066">
    <property type="entry name" value="Beta_CA_cladeB"/>
</dbReference>
<dbReference type="InterPro" id="IPR001765">
    <property type="entry name" value="Carbonic_anhydrase"/>
</dbReference>
<dbReference type="InterPro" id="IPR015892">
    <property type="entry name" value="Carbonic_anhydrase_CS"/>
</dbReference>
<dbReference type="InterPro" id="IPR036874">
    <property type="entry name" value="Carbonic_anhydrase_sf"/>
</dbReference>
<dbReference type="PANTHER" id="PTHR11002:SF56">
    <property type="entry name" value="BETA CARBONIC ANHYDRASE 2, CHLOROPLASTIC"/>
    <property type="match status" value="1"/>
</dbReference>
<dbReference type="PANTHER" id="PTHR11002">
    <property type="entry name" value="CARBONIC ANHYDRASE"/>
    <property type="match status" value="1"/>
</dbReference>
<dbReference type="Pfam" id="PF00484">
    <property type="entry name" value="Pro_CA"/>
    <property type="match status" value="1"/>
</dbReference>
<dbReference type="SMART" id="SM00947">
    <property type="entry name" value="Pro_CA"/>
    <property type="match status" value="1"/>
</dbReference>
<dbReference type="SUPFAM" id="SSF53056">
    <property type="entry name" value="beta-carbonic anhydrase, cab"/>
    <property type="match status" value="1"/>
</dbReference>
<dbReference type="PROSITE" id="PS00704">
    <property type="entry name" value="PROK_CO2_ANHYDRASE_1"/>
    <property type="match status" value="1"/>
</dbReference>
<dbReference type="PROSITE" id="PS00705">
    <property type="entry name" value="PROK_CO2_ANHYDRASE_2"/>
    <property type="match status" value="1"/>
</dbReference>
<protein>
    <recommendedName>
        <fullName>Carbonic anhydrase, chloroplastic</fullName>
        <ecNumber>4.2.1.1</ecNumber>
    </recommendedName>
    <alternativeName>
        <fullName>Carbonate dehydratase</fullName>
    </alternativeName>
</protein>
<comment type="function">
    <text>Reversible hydration of carbon dioxide.</text>
</comment>
<comment type="catalytic activity">
    <reaction>
        <text>hydrogencarbonate + H(+) = CO2 + H2O</text>
        <dbReference type="Rhea" id="RHEA:10748"/>
        <dbReference type="ChEBI" id="CHEBI:15377"/>
        <dbReference type="ChEBI" id="CHEBI:15378"/>
        <dbReference type="ChEBI" id="CHEBI:16526"/>
        <dbReference type="ChEBI" id="CHEBI:17544"/>
        <dbReference type="EC" id="4.2.1.1"/>
    </reaction>
</comment>
<comment type="subunit">
    <text>Homohexamer.</text>
</comment>
<comment type="subcellular location">
    <subcellularLocation>
        <location>Plastid</location>
        <location>Chloroplast stroma</location>
    </subcellularLocation>
</comment>
<comment type="similarity">
    <text evidence="2">Belongs to the beta-class carbonic anhydrase family.</text>
</comment>
<keyword id="KW-0150">Chloroplast</keyword>
<keyword id="KW-0456">Lyase</keyword>
<keyword id="KW-0934">Plastid</keyword>
<keyword id="KW-1185">Reference proteome</keyword>
<keyword id="KW-0809">Transit peptide</keyword>
<keyword id="KW-0862">Zinc</keyword>
<feature type="transit peptide" description="Chloroplast" evidence="1">
    <location>
        <begin position="1"/>
        <end position="100"/>
    </location>
</feature>
<feature type="chain" id="PRO_0000004272" description="Carbonic anhydrase, chloroplastic">
    <location>
        <begin position="101"/>
        <end position="321"/>
    </location>
</feature>
<feature type="sequence conflict" description="In Ref. 2; AAA34057." evidence="2" ref="2">
    <original>V</original>
    <variation>I</variation>
    <location>
        <position position="180"/>
    </location>
</feature>
<feature type="sequence conflict" description="In Ref. 2; AAA34057." evidence="2" ref="2">
    <original>A</original>
    <variation>G</variation>
    <location>
        <position position="259"/>
    </location>
</feature>
<proteinExistence type="evidence at transcript level"/>
<evidence type="ECO:0000255" key="1"/>
<evidence type="ECO:0000305" key="2"/>
<accession>P27141</accession>